<keyword id="KW-0067">ATP-binding</keyword>
<keyword id="KW-0227">DNA damage</keyword>
<keyword id="KW-0234">DNA repair</keyword>
<keyword id="KW-0238">DNA-binding</keyword>
<keyword id="KW-0547">Nucleotide-binding</keyword>
<sequence>MAQYTPMIQQYLKVKADYKDAFLFFRLGDFYEMFFEDAVKAAHELEITLTSRDGGSSERIPMCGVPYHAAQNYIEQLIEKGYKVAICEQVEDPKTAKGVVRREVVQLITPGTMMEGRTIDEKENNFLAALTRFEDGSYALACNDLTTGQNTVTLLTGSVEDVLLEVYATGSKEIVVDSTFSQDELNKLTETLKMTVSYEEETKIPEGLEPLVKKVTQTKLVTAVGRLFNYVLRTQKRSLDHLQPVEIYYTNQFMKIDVHSKRNLELTETLRTKEKTGSLLWLLDKTKTAMGGRMLKQWMERPLIQKEKIEERLEMVETFVNDYFLREDLKEKLKEVYDLERLAGKVAYGSVNARDLLQLKRSLQQVPAILEAISLLDNSYAAKLIEGADPCEALTKLLDRSIQENPPLSVKDGDIIKDGYNEKLDEYRYISKNGKTWIAELEKREREITGIKSLKIGYNRIFGYYIEVTKANLSLLPEGRYERKQTLANAERFITDELKEKETLILEAEEKIVQLEYDLFTALREEVKVFIPKLQHLAKVISELDVLQSFATVSEEERFVKPVLTNKREIFIKDGRHPVVEKVLDGKLYVPNDCMMPENMDVFLITGPNMSGKSTYMRQLALVTIMAQIGCFVPATEAILPVFDQIFTRIGAADDLISGQSTFMVEMLEAKNAIANASERSLILFDEIGRGTSTYDGMALAQAIIEHIHDQIGAKTLFSTHYHELTVLEESLTHLKNVHVSAIEEDGKVVFLHKIQEGAADKSYGIHVAQLAELPDSLIARAKEVLAQLEGQEEITIPKRTEVKEQPERMQQPVIEEQPVIKEVAEVQQESEEIVEESQLSFFETEERMEKQEKPVLDAKETAVLAQIKKIDLLDMTPLEALNELYRLQKKLKKG</sequence>
<proteinExistence type="inferred from homology"/>
<dbReference type="EMBL" id="CP000764">
    <property type="protein sequence ID" value="ABS22657.1"/>
    <property type="molecule type" value="Genomic_DNA"/>
</dbReference>
<dbReference type="RefSeq" id="WP_012094856.1">
    <property type="nucleotide sequence ID" value="NC_009674.1"/>
</dbReference>
<dbReference type="SMR" id="A7GR99"/>
<dbReference type="STRING" id="315749.Bcer98_2421"/>
<dbReference type="GeneID" id="33897676"/>
<dbReference type="KEGG" id="bcy:Bcer98_2421"/>
<dbReference type="eggNOG" id="COG0249">
    <property type="taxonomic scope" value="Bacteria"/>
</dbReference>
<dbReference type="HOGENOM" id="CLU_002472_3_1_9"/>
<dbReference type="OrthoDB" id="9802448at2"/>
<dbReference type="Proteomes" id="UP000002300">
    <property type="component" value="Chromosome"/>
</dbReference>
<dbReference type="GO" id="GO:0005829">
    <property type="term" value="C:cytosol"/>
    <property type="evidence" value="ECO:0007669"/>
    <property type="project" value="TreeGrafter"/>
</dbReference>
<dbReference type="GO" id="GO:0005524">
    <property type="term" value="F:ATP binding"/>
    <property type="evidence" value="ECO:0007669"/>
    <property type="project" value="UniProtKB-UniRule"/>
</dbReference>
<dbReference type="GO" id="GO:0140664">
    <property type="term" value="F:ATP-dependent DNA damage sensor activity"/>
    <property type="evidence" value="ECO:0007669"/>
    <property type="project" value="InterPro"/>
</dbReference>
<dbReference type="GO" id="GO:0003684">
    <property type="term" value="F:damaged DNA binding"/>
    <property type="evidence" value="ECO:0007669"/>
    <property type="project" value="UniProtKB-UniRule"/>
</dbReference>
<dbReference type="GO" id="GO:0030983">
    <property type="term" value="F:mismatched DNA binding"/>
    <property type="evidence" value="ECO:0007669"/>
    <property type="project" value="InterPro"/>
</dbReference>
<dbReference type="GO" id="GO:0006298">
    <property type="term" value="P:mismatch repair"/>
    <property type="evidence" value="ECO:0007669"/>
    <property type="project" value="UniProtKB-UniRule"/>
</dbReference>
<dbReference type="CDD" id="cd03284">
    <property type="entry name" value="ABC_MutS1"/>
    <property type="match status" value="1"/>
</dbReference>
<dbReference type="FunFam" id="1.10.1420.10:FF:000007">
    <property type="entry name" value="DNA mismatch repair protein MutS"/>
    <property type="match status" value="1"/>
</dbReference>
<dbReference type="FunFam" id="3.40.1170.10:FF:000001">
    <property type="entry name" value="DNA mismatch repair protein MutS"/>
    <property type="match status" value="1"/>
</dbReference>
<dbReference type="FunFam" id="3.40.50.300:FF:000896">
    <property type="entry name" value="DNA mismatch repair protein MutS"/>
    <property type="match status" value="1"/>
</dbReference>
<dbReference type="Gene3D" id="1.10.1420.10">
    <property type="match status" value="2"/>
</dbReference>
<dbReference type="Gene3D" id="3.40.1170.10">
    <property type="entry name" value="DNA repair protein MutS, domain I"/>
    <property type="match status" value="1"/>
</dbReference>
<dbReference type="Gene3D" id="3.30.420.110">
    <property type="entry name" value="MutS, connector domain"/>
    <property type="match status" value="1"/>
</dbReference>
<dbReference type="Gene3D" id="3.40.50.300">
    <property type="entry name" value="P-loop containing nucleotide triphosphate hydrolases"/>
    <property type="match status" value="1"/>
</dbReference>
<dbReference type="HAMAP" id="MF_00096">
    <property type="entry name" value="MutS"/>
    <property type="match status" value="1"/>
</dbReference>
<dbReference type="InterPro" id="IPR005748">
    <property type="entry name" value="DNA_mismatch_repair_MutS"/>
</dbReference>
<dbReference type="InterPro" id="IPR007695">
    <property type="entry name" value="DNA_mismatch_repair_MutS-lik_N"/>
</dbReference>
<dbReference type="InterPro" id="IPR017261">
    <property type="entry name" value="DNA_mismatch_repair_MutS/MSH"/>
</dbReference>
<dbReference type="InterPro" id="IPR000432">
    <property type="entry name" value="DNA_mismatch_repair_MutS_C"/>
</dbReference>
<dbReference type="InterPro" id="IPR007861">
    <property type="entry name" value="DNA_mismatch_repair_MutS_clamp"/>
</dbReference>
<dbReference type="InterPro" id="IPR007696">
    <property type="entry name" value="DNA_mismatch_repair_MutS_core"/>
</dbReference>
<dbReference type="InterPro" id="IPR016151">
    <property type="entry name" value="DNA_mismatch_repair_MutS_N"/>
</dbReference>
<dbReference type="InterPro" id="IPR036187">
    <property type="entry name" value="DNA_mismatch_repair_MutS_sf"/>
</dbReference>
<dbReference type="InterPro" id="IPR007860">
    <property type="entry name" value="DNA_mmatch_repair_MutS_con_dom"/>
</dbReference>
<dbReference type="InterPro" id="IPR045076">
    <property type="entry name" value="MutS"/>
</dbReference>
<dbReference type="InterPro" id="IPR036678">
    <property type="entry name" value="MutS_con_dom_sf"/>
</dbReference>
<dbReference type="InterPro" id="IPR027417">
    <property type="entry name" value="P-loop_NTPase"/>
</dbReference>
<dbReference type="NCBIfam" id="TIGR01070">
    <property type="entry name" value="mutS1"/>
    <property type="match status" value="1"/>
</dbReference>
<dbReference type="NCBIfam" id="NF003810">
    <property type="entry name" value="PRK05399.1"/>
    <property type="match status" value="1"/>
</dbReference>
<dbReference type="PANTHER" id="PTHR11361:SF34">
    <property type="entry name" value="DNA MISMATCH REPAIR PROTEIN MSH1, MITOCHONDRIAL"/>
    <property type="match status" value="1"/>
</dbReference>
<dbReference type="PANTHER" id="PTHR11361">
    <property type="entry name" value="DNA MISMATCH REPAIR PROTEIN MUTS FAMILY MEMBER"/>
    <property type="match status" value="1"/>
</dbReference>
<dbReference type="Pfam" id="PF01624">
    <property type="entry name" value="MutS_I"/>
    <property type="match status" value="1"/>
</dbReference>
<dbReference type="Pfam" id="PF05188">
    <property type="entry name" value="MutS_II"/>
    <property type="match status" value="1"/>
</dbReference>
<dbReference type="Pfam" id="PF05192">
    <property type="entry name" value="MutS_III"/>
    <property type="match status" value="1"/>
</dbReference>
<dbReference type="Pfam" id="PF05190">
    <property type="entry name" value="MutS_IV"/>
    <property type="match status" value="1"/>
</dbReference>
<dbReference type="Pfam" id="PF00488">
    <property type="entry name" value="MutS_V"/>
    <property type="match status" value="1"/>
</dbReference>
<dbReference type="PIRSF" id="PIRSF037677">
    <property type="entry name" value="DNA_mis_repair_Msh6"/>
    <property type="match status" value="1"/>
</dbReference>
<dbReference type="SMART" id="SM00534">
    <property type="entry name" value="MUTSac"/>
    <property type="match status" value="1"/>
</dbReference>
<dbReference type="SMART" id="SM00533">
    <property type="entry name" value="MUTSd"/>
    <property type="match status" value="1"/>
</dbReference>
<dbReference type="SUPFAM" id="SSF55271">
    <property type="entry name" value="DNA repair protein MutS, domain I"/>
    <property type="match status" value="1"/>
</dbReference>
<dbReference type="SUPFAM" id="SSF53150">
    <property type="entry name" value="DNA repair protein MutS, domain II"/>
    <property type="match status" value="1"/>
</dbReference>
<dbReference type="SUPFAM" id="SSF48334">
    <property type="entry name" value="DNA repair protein MutS, domain III"/>
    <property type="match status" value="1"/>
</dbReference>
<dbReference type="SUPFAM" id="SSF52540">
    <property type="entry name" value="P-loop containing nucleoside triphosphate hydrolases"/>
    <property type="match status" value="1"/>
</dbReference>
<dbReference type="PROSITE" id="PS00486">
    <property type="entry name" value="DNA_MISMATCH_REPAIR_2"/>
    <property type="match status" value="1"/>
</dbReference>
<feature type="chain" id="PRO_1000075552" description="DNA mismatch repair protein MutS">
    <location>
        <begin position="1"/>
        <end position="895"/>
    </location>
</feature>
<feature type="binding site" evidence="1">
    <location>
        <begin position="607"/>
        <end position="614"/>
    </location>
    <ligand>
        <name>ATP</name>
        <dbReference type="ChEBI" id="CHEBI:30616"/>
    </ligand>
</feature>
<organism>
    <name type="scientific">Bacillus cytotoxicus (strain DSM 22905 / CIP 110041 / 391-98 / NVH 391-98)</name>
    <dbReference type="NCBI Taxonomy" id="315749"/>
    <lineage>
        <taxon>Bacteria</taxon>
        <taxon>Bacillati</taxon>
        <taxon>Bacillota</taxon>
        <taxon>Bacilli</taxon>
        <taxon>Bacillales</taxon>
        <taxon>Bacillaceae</taxon>
        <taxon>Bacillus</taxon>
        <taxon>Bacillus cereus group</taxon>
    </lineage>
</organism>
<gene>
    <name evidence="1" type="primary">mutS</name>
    <name type="ordered locus">Bcer98_2421</name>
</gene>
<comment type="function">
    <text evidence="1">This protein is involved in the repair of mismatches in DNA. It is possible that it carries out the mismatch recognition step. This protein has a weak ATPase activity.</text>
</comment>
<comment type="similarity">
    <text evidence="1">Belongs to the DNA mismatch repair MutS family.</text>
</comment>
<reference key="1">
    <citation type="journal article" date="2008" name="Chem. Biol. Interact.">
        <title>Extending the Bacillus cereus group genomics to putative food-borne pathogens of different toxicity.</title>
        <authorList>
            <person name="Lapidus A."/>
            <person name="Goltsman E."/>
            <person name="Auger S."/>
            <person name="Galleron N."/>
            <person name="Segurens B."/>
            <person name="Dossat C."/>
            <person name="Land M.L."/>
            <person name="Broussolle V."/>
            <person name="Brillard J."/>
            <person name="Guinebretiere M.-H."/>
            <person name="Sanchis V."/>
            <person name="Nguen-the C."/>
            <person name="Lereclus D."/>
            <person name="Richardson P."/>
            <person name="Wincker P."/>
            <person name="Weissenbach J."/>
            <person name="Ehrlich S.D."/>
            <person name="Sorokin A."/>
        </authorList>
    </citation>
    <scope>NUCLEOTIDE SEQUENCE [LARGE SCALE GENOMIC DNA]</scope>
    <source>
        <strain>DSM 22905 / CIP 110041 / 391-98 / NVH 391-98</strain>
    </source>
</reference>
<name>MUTS_BACCN</name>
<accession>A7GR99</accession>
<evidence type="ECO:0000255" key="1">
    <source>
        <dbReference type="HAMAP-Rule" id="MF_00096"/>
    </source>
</evidence>
<protein>
    <recommendedName>
        <fullName evidence="1">DNA mismatch repair protein MutS</fullName>
    </recommendedName>
</protein>